<comment type="function">
    <text evidence="1">Promotes RNA polymerase assembly. Latches the N- and C-terminal regions of the beta' subunit thereby facilitating its interaction with the beta and alpha subunits.</text>
</comment>
<comment type="catalytic activity">
    <reaction evidence="1">
        <text>RNA(n) + a ribonucleoside 5'-triphosphate = RNA(n+1) + diphosphate</text>
        <dbReference type="Rhea" id="RHEA:21248"/>
        <dbReference type="Rhea" id="RHEA-COMP:14527"/>
        <dbReference type="Rhea" id="RHEA-COMP:17342"/>
        <dbReference type="ChEBI" id="CHEBI:33019"/>
        <dbReference type="ChEBI" id="CHEBI:61557"/>
        <dbReference type="ChEBI" id="CHEBI:140395"/>
        <dbReference type="EC" id="2.7.7.6"/>
    </reaction>
</comment>
<comment type="subunit">
    <text evidence="1">The RNAP catalytic core consists of 2 alpha, 1 beta, 1 beta' and 1 omega subunit. When a sigma factor is associated with the core the holoenzyme is formed, which can initiate transcription.</text>
</comment>
<comment type="similarity">
    <text evidence="1">Belongs to the RNA polymerase subunit omega family.</text>
</comment>
<organism>
    <name type="scientific">Clostridium acetobutylicum (strain ATCC 824 / DSM 792 / JCM 1419 / IAM 19013 / LMG 5710 / NBRC 13948 / NRRL B-527 / VKM B-1787 / 2291 / W)</name>
    <dbReference type="NCBI Taxonomy" id="272562"/>
    <lineage>
        <taxon>Bacteria</taxon>
        <taxon>Bacillati</taxon>
        <taxon>Bacillota</taxon>
        <taxon>Clostridia</taxon>
        <taxon>Eubacteriales</taxon>
        <taxon>Clostridiaceae</taxon>
        <taxon>Clostridium</taxon>
    </lineage>
</organism>
<protein>
    <recommendedName>
        <fullName evidence="1">DNA-directed RNA polymerase subunit omega</fullName>
        <shortName evidence="1">RNAP omega subunit</shortName>
        <ecNumber evidence="1">2.7.7.6</ecNumber>
    </recommendedName>
    <alternativeName>
        <fullName evidence="1">RNA polymerase omega subunit</fullName>
    </alternativeName>
    <alternativeName>
        <fullName evidence="1">Transcriptase subunit omega</fullName>
    </alternativeName>
</protein>
<name>RPOZ_CLOAB</name>
<feature type="chain" id="PRO_0000128927" description="DNA-directed RNA polymerase subunit omega">
    <location>
        <begin position="1"/>
        <end position="72"/>
    </location>
</feature>
<proteinExistence type="inferred from homology"/>
<gene>
    <name evidence="1" type="primary">rpoZ</name>
    <name type="ordered locus">CA_C1719</name>
</gene>
<accession>Q97IC9</accession>
<evidence type="ECO:0000255" key="1">
    <source>
        <dbReference type="HAMAP-Rule" id="MF_00366"/>
    </source>
</evidence>
<dbReference type="EC" id="2.7.7.6" evidence="1"/>
<dbReference type="EMBL" id="AE001437">
    <property type="protein sequence ID" value="AAK79685.1"/>
    <property type="molecule type" value="Genomic_DNA"/>
</dbReference>
<dbReference type="PIR" id="B97112">
    <property type="entry name" value="B97112"/>
</dbReference>
<dbReference type="RefSeq" id="NP_348345.1">
    <property type="nucleotide sequence ID" value="NC_003030.1"/>
</dbReference>
<dbReference type="RefSeq" id="WP_010965026.1">
    <property type="nucleotide sequence ID" value="NC_003030.1"/>
</dbReference>
<dbReference type="SMR" id="Q97IC9"/>
<dbReference type="STRING" id="272562.CA_C1719"/>
<dbReference type="GeneID" id="44998214"/>
<dbReference type="KEGG" id="cac:CA_C1719"/>
<dbReference type="PATRIC" id="fig|272562.8.peg.1921"/>
<dbReference type="eggNOG" id="COG1758">
    <property type="taxonomic scope" value="Bacteria"/>
</dbReference>
<dbReference type="HOGENOM" id="CLU_125406_6_1_9"/>
<dbReference type="OrthoDB" id="9815459at2"/>
<dbReference type="Proteomes" id="UP000000814">
    <property type="component" value="Chromosome"/>
</dbReference>
<dbReference type="GO" id="GO:0000428">
    <property type="term" value="C:DNA-directed RNA polymerase complex"/>
    <property type="evidence" value="ECO:0007669"/>
    <property type="project" value="UniProtKB-KW"/>
</dbReference>
<dbReference type="GO" id="GO:0003677">
    <property type="term" value="F:DNA binding"/>
    <property type="evidence" value="ECO:0007669"/>
    <property type="project" value="UniProtKB-UniRule"/>
</dbReference>
<dbReference type="GO" id="GO:0003899">
    <property type="term" value="F:DNA-directed RNA polymerase activity"/>
    <property type="evidence" value="ECO:0007669"/>
    <property type="project" value="UniProtKB-UniRule"/>
</dbReference>
<dbReference type="GO" id="GO:0006351">
    <property type="term" value="P:DNA-templated transcription"/>
    <property type="evidence" value="ECO:0007669"/>
    <property type="project" value="UniProtKB-UniRule"/>
</dbReference>
<dbReference type="Gene3D" id="3.90.940.10">
    <property type="match status" value="1"/>
</dbReference>
<dbReference type="HAMAP" id="MF_00366">
    <property type="entry name" value="RNApol_bact_RpoZ"/>
    <property type="match status" value="1"/>
</dbReference>
<dbReference type="InterPro" id="IPR003716">
    <property type="entry name" value="DNA-dir_RNA_pol_omega"/>
</dbReference>
<dbReference type="InterPro" id="IPR006110">
    <property type="entry name" value="Pol_omega/Rpo6/RPB6"/>
</dbReference>
<dbReference type="InterPro" id="IPR036161">
    <property type="entry name" value="RPB6/omega-like_sf"/>
</dbReference>
<dbReference type="NCBIfam" id="TIGR00690">
    <property type="entry name" value="rpoZ"/>
    <property type="match status" value="1"/>
</dbReference>
<dbReference type="PANTHER" id="PTHR34476">
    <property type="entry name" value="DNA-DIRECTED RNA POLYMERASE SUBUNIT OMEGA"/>
    <property type="match status" value="1"/>
</dbReference>
<dbReference type="PANTHER" id="PTHR34476:SF1">
    <property type="entry name" value="DNA-DIRECTED RNA POLYMERASE SUBUNIT OMEGA"/>
    <property type="match status" value="1"/>
</dbReference>
<dbReference type="Pfam" id="PF01192">
    <property type="entry name" value="RNA_pol_Rpb6"/>
    <property type="match status" value="1"/>
</dbReference>
<dbReference type="SMART" id="SM01409">
    <property type="entry name" value="RNA_pol_Rpb6"/>
    <property type="match status" value="1"/>
</dbReference>
<dbReference type="SUPFAM" id="SSF63562">
    <property type="entry name" value="RPB6/omega subunit-like"/>
    <property type="match status" value="1"/>
</dbReference>
<sequence length="72" mass="7927">MNNSMISPSVVDLKAKTGDRYSLVVITSKRARQIIAGEEPLVDIESNKALTIAINEVDQDKIKFDLPIEGIN</sequence>
<keyword id="KW-0240">DNA-directed RNA polymerase</keyword>
<keyword id="KW-0548">Nucleotidyltransferase</keyword>
<keyword id="KW-1185">Reference proteome</keyword>
<keyword id="KW-0804">Transcription</keyword>
<keyword id="KW-0808">Transferase</keyword>
<reference key="1">
    <citation type="journal article" date="2001" name="J. Bacteriol.">
        <title>Genome sequence and comparative analysis of the solvent-producing bacterium Clostridium acetobutylicum.</title>
        <authorList>
            <person name="Noelling J."/>
            <person name="Breton G."/>
            <person name="Omelchenko M.V."/>
            <person name="Makarova K.S."/>
            <person name="Zeng Q."/>
            <person name="Gibson R."/>
            <person name="Lee H.M."/>
            <person name="Dubois J."/>
            <person name="Qiu D."/>
            <person name="Hitti J."/>
            <person name="Wolf Y.I."/>
            <person name="Tatusov R.L."/>
            <person name="Sabathe F."/>
            <person name="Doucette-Stamm L.A."/>
            <person name="Soucaille P."/>
            <person name="Daly M.J."/>
            <person name="Bennett G.N."/>
            <person name="Koonin E.V."/>
            <person name="Smith D.R."/>
        </authorList>
    </citation>
    <scope>NUCLEOTIDE SEQUENCE [LARGE SCALE GENOMIC DNA]</scope>
    <source>
        <strain>ATCC 824 / DSM 792 / JCM 1419 / IAM 19013 / LMG 5710 / NBRC 13948 / NRRL B-527 / VKM B-1787 / 2291 / W</strain>
    </source>
</reference>